<name>ADH1_CHICK</name>
<keyword id="KW-0007">Acetylation</keyword>
<keyword id="KW-0963">Cytoplasm</keyword>
<keyword id="KW-0903">Direct protein sequencing</keyword>
<keyword id="KW-0479">Metal-binding</keyword>
<keyword id="KW-0520">NAD</keyword>
<keyword id="KW-0560">Oxidoreductase</keyword>
<keyword id="KW-1185">Reference proteome</keyword>
<keyword id="KW-0862">Zinc</keyword>
<dbReference type="EC" id="1.1.1.1"/>
<dbReference type="EMBL" id="X54612">
    <property type="protein sequence ID" value="CAA38433.1"/>
    <property type="status" value="ALT_SEQ"/>
    <property type="molecule type" value="mRNA"/>
</dbReference>
<dbReference type="PIR" id="S13851">
    <property type="entry name" value="DECHA1"/>
</dbReference>
<dbReference type="RefSeq" id="NP_001292112.1">
    <property type="nucleotide sequence ID" value="NM_001305183.1"/>
</dbReference>
<dbReference type="SMR" id="P23991"/>
<dbReference type="FunCoup" id="P23991">
    <property type="interactions" value="1158"/>
</dbReference>
<dbReference type="STRING" id="9031.ENSGALP00000054258"/>
<dbReference type="iPTMnet" id="P23991"/>
<dbReference type="PaxDb" id="9031-ENSGALP00000019979"/>
<dbReference type="Ensembl" id="ENSGALT00010014452.1">
    <property type="protein sequence ID" value="ENSGALP00010008482.1"/>
    <property type="gene ID" value="ENSGALG00010006035.1"/>
</dbReference>
<dbReference type="GeneID" id="771920"/>
<dbReference type="KEGG" id="gga:771920"/>
<dbReference type="CTD" id="126"/>
<dbReference type="VEuPathDB" id="HostDB:geneid_771920"/>
<dbReference type="eggNOG" id="KOG0022">
    <property type="taxonomic scope" value="Eukaryota"/>
</dbReference>
<dbReference type="GeneTree" id="ENSGT00940000164026"/>
<dbReference type="InParanoid" id="P23991"/>
<dbReference type="OrthoDB" id="417550at2759"/>
<dbReference type="PhylomeDB" id="P23991"/>
<dbReference type="PRO" id="PR:P23991"/>
<dbReference type="Proteomes" id="UP000000539">
    <property type="component" value="Chromosome 4"/>
</dbReference>
<dbReference type="GO" id="GO:0005829">
    <property type="term" value="C:cytosol"/>
    <property type="evidence" value="ECO:0000318"/>
    <property type="project" value="GO_Central"/>
</dbReference>
<dbReference type="GO" id="GO:0004745">
    <property type="term" value="F:all-trans-retinol dehydrogenase (NAD+) activity"/>
    <property type="evidence" value="ECO:0000318"/>
    <property type="project" value="GO_Central"/>
</dbReference>
<dbReference type="GO" id="GO:0008270">
    <property type="term" value="F:zinc ion binding"/>
    <property type="evidence" value="ECO:0000318"/>
    <property type="project" value="GO_Central"/>
</dbReference>
<dbReference type="GO" id="GO:0042573">
    <property type="term" value="P:retinoic acid metabolic process"/>
    <property type="evidence" value="ECO:0000318"/>
    <property type="project" value="GO_Central"/>
</dbReference>
<dbReference type="GO" id="GO:0042572">
    <property type="term" value="P:retinol metabolic process"/>
    <property type="evidence" value="ECO:0000318"/>
    <property type="project" value="GO_Central"/>
</dbReference>
<dbReference type="CDD" id="cd08299">
    <property type="entry name" value="alcohol_DH_class_I_II_IV"/>
    <property type="match status" value="1"/>
</dbReference>
<dbReference type="FunFam" id="3.40.50.720:FF:000003">
    <property type="entry name" value="S-(hydroxymethyl)glutathione dehydrogenase"/>
    <property type="match status" value="1"/>
</dbReference>
<dbReference type="FunFam" id="3.90.180.10:FF:000001">
    <property type="entry name" value="S-(hydroxymethyl)glutathione dehydrogenase"/>
    <property type="match status" value="1"/>
</dbReference>
<dbReference type="Gene3D" id="3.90.180.10">
    <property type="entry name" value="Medium-chain alcohol dehydrogenases, catalytic domain"/>
    <property type="match status" value="1"/>
</dbReference>
<dbReference type="Gene3D" id="3.40.50.720">
    <property type="entry name" value="NAD(P)-binding Rossmann-like Domain"/>
    <property type="match status" value="1"/>
</dbReference>
<dbReference type="InterPro" id="IPR013149">
    <property type="entry name" value="ADH-like_C"/>
</dbReference>
<dbReference type="InterPro" id="IPR013154">
    <property type="entry name" value="ADH-like_N"/>
</dbReference>
<dbReference type="InterPro" id="IPR002328">
    <property type="entry name" value="ADH_Zn_CS"/>
</dbReference>
<dbReference type="InterPro" id="IPR011032">
    <property type="entry name" value="GroES-like_sf"/>
</dbReference>
<dbReference type="InterPro" id="IPR036291">
    <property type="entry name" value="NAD(P)-bd_dom_sf"/>
</dbReference>
<dbReference type="InterPro" id="IPR020843">
    <property type="entry name" value="PKS_ER"/>
</dbReference>
<dbReference type="PANTHER" id="PTHR43880">
    <property type="entry name" value="ALCOHOL DEHYDROGENASE"/>
    <property type="match status" value="1"/>
</dbReference>
<dbReference type="PANTHER" id="PTHR43880:SF1">
    <property type="entry name" value="ALCOHOL DEHYDROGENASE 1A"/>
    <property type="match status" value="1"/>
</dbReference>
<dbReference type="Pfam" id="PF08240">
    <property type="entry name" value="ADH_N"/>
    <property type="match status" value="1"/>
</dbReference>
<dbReference type="Pfam" id="PF00107">
    <property type="entry name" value="ADH_zinc_N"/>
    <property type="match status" value="1"/>
</dbReference>
<dbReference type="SMART" id="SM00829">
    <property type="entry name" value="PKS_ER"/>
    <property type="match status" value="1"/>
</dbReference>
<dbReference type="SUPFAM" id="SSF50129">
    <property type="entry name" value="GroES-like"/>
    <property type="match status" value="2"/>
</dbReference>
<dbReference type="SUPFAM" id="SSF51735">
    <property type="entry name" value="NAD(P)-binding Rossmann-fold domains"/>
    <property type="match status" value="1"/>
</dbReference>
<dbReference type="PROSITE" id="PS00059">
    <property type="entry name" value="ADH_ZINC"/>
    <property type="match status" value="1"/>
</dbReference>
<feature type="initiator methionine" description="Removed" evidence="2">
    <location>
        <position position="1"/>
    </location>
</feature>
<feature type="chain" id="PRO_0000160672" description="Alcohol dehydrogenase 1">
    <location>
        <begin position="2"/>
        <end position="376"/>
    </location>
</feature>
<feature type="binding site">
    <location>
        <position position="47"/>
    </location>
    <ligand>
        <name>Zn(2+)</name>
        <dbReference type="ChEBI" id="CHEBI:29105"/>
        <label>1</label>
        <note>catalytic</note>
    </ligand>
</feature>
<feature type="binding site">
    <location>
        <position position="68"/>
    </location>
    <ligand>
        <name>Zn(2+)</name>
        <dbReference type="ChEBI" id="CHEBI:29105"/>
        <label>1</label>
        <note>catalytic</note>
    </ligand>
</feature>
<feature type="binding site">
    <location>
        <position position="98"/>
    </location>
    <ligand>
        <name>Zn(2+)</name>
        <dbReference type="ChEBI" id="CHEBI:29105"/>
        <label>2</label>
    </ligand>
</feature>
<feature type="binding site">
    <location>
        <position position="101"/>
    </location>
    <ligand>
        <name>Zn(2+)</name>
        <dbReference type="ChEBI" id="CHEBI:29105"/>
        <label>2</label>
    </ligand>
</feature>
<feature type="binding site">
    <location>
        <position position="104"/>
    </location>
    <ligand>
        <name>Zn(2+)</name>
        <dbReference type="ChEBI" id="CHEBI:29105"/>
        <label>2</label>
    </ligand>
</feature>
<feature type="binding site">
    <location>
        <position position="112"/>
    </location>
    <ligand>
        <name>Zn(2+)</name>
        <dbReference type="ChEBI" id="CHEBI:29105"/>
        <label>2</label>
    </ligand>
</feature>
<feature type="binding site">
    <location>
        <position position="176"/>
    </location>
    <ligand>
        <name>Zn(2+)</name>
        <dbReference type="ChEBI" id="CHEBI:29105"/>
        <label>1</label>
        <note>catalytic</note>
    </ligand>
</feature>
<feature type="binding site" evidence="1">
    <location>
        <begin position="201"/>
        <end position="206"/>
    </location>
    <ligand>
        <name>NAD(+)</name>
        <dbReference type="ChEBI" id="CHEBI:57540"/>
    </ligand>
</feature>
<feature type="binding site" evidence="1">
    <location>
        <position position="225"/>
    </location>
    <ligand>
        <name>NAD(+)</name>
        <dbReference type="ChEBI" id="CHEBI:57540"/>
    </ligand>
</feature>
<feature type="binding site" evidence="1">
    <location>
        <position position="230"/>
    </location>
    <ligand>
        <name>NAD(+)</name>
        <dbReference type="ChEBI" id="CHEBI:57540"/>
    </ligand>
</feature>
<feature type="binding site" evidence="1">
    <location>
        <begin position="294"/>
        <end position="296"/>
    </location>
    <ligand>
        <name>NAD(+)</name>
        <dbReference type="ChEBI" id="CHEBI:57540"/>
    </ligand>
</feature>
<feature type="binding site" evidence="1">
    <location>
        <position position="371"/>
    </location>
    <ligand>
        <name>NAD(+)</name>
        <dbReference type="ChEBI" id="CHEBI:57540"/>
    </ligand>
</feature>
<feature type="modified residue" description="N-acetylserine" evidence="2">
    <location>
        <position position="2"/>
    </location>
</feature>
<reference key="1">
    <citation type="journal article" date="1990" name="Eur. J. Biochem.">
        <title>Avian alcohol dehydrogenase: the chicken liver enzyme. Primary structure, cDNA-cloning, and relationships to other alcohol dehydrogenases.</title>
        <authorList>
            <person name="Estonius M."/>
            <person name="Karlsson C."/>
            <person name="Fox E.A."/>
            <person name="Hoeoeg J.-O."/>
            <person name="Holmquist B."/>
            <person name="Vallee B.L."/>
            <person name="Davidson W.S."/>
            <person name="Joernvall H."/>
        </authorList>
    </citation>
    <scope>NUCLEOTIDE SEQUENCE [MRNA]</scope>
    <source>
        <tissue>Liver</tissue>
    </source>
</reference>
<reference key="2">
    <citation type="journal article" date="1990" name="FEBS Lett.">
        <title>Fast atom bombardment mass spectrometry and chemical analysis in determinations of acyl-blocked protein structures.</title>
        <authorList>
            <person name="Egestad B."/>
            <person name="Estonius M."/>
            <person name="Danielsson O."/>
            <person name="Persson B."/>
            <person name="Cederlund E."/>
            <person name="Kaiser R."/>
            <person name="Holmquist B."/>
            <person name="Vallee B."/>
            <person name="Pares X."/>
            <person name="Jefferey J."/>
            <person name="Joernvall H."/>
        </authorList>
    </citation>
    <scope>PROTEIN SEQUENCE OF 2-17 AND 360-376</scope>
    <scope>ACETYLATION AT SER-2</scope>
</reference>
<proteinExistence type="evidence at protein level"/>
<sequence>MSTVGKVIKCKAAVLWEANKPFSLEEVEVAPPKAHEVRIKIVATGICRSDDHVVTGALAMPFPIILGHEAAGVIESVGEKVTSLKPGDAVIPLFVPQCGECRSCLSTKGNLCIKNDLSSSPTGLMADGTTRFTCKGKAIHHFVGTSTFTEYTVVHETAAAKIDSAAPLEKVCLIGCGFSTGYGAVLQTAKVEAGSTCAVFGLGGVGLSVVMGCKAAGASRIIAVDINKDKFAKAKELGATECINPKDFKKPIHEVLTEMTGQGVDYSFEVIGRIETMTAALASCHNNYGVSVIVGVPPAAQKISFDPMLIFSGRTWKGSVFGGWKSKDAVPKLVADYMKKKFVLDPLITHTLPFTKINEGFDLLRTGKSIRSVLVL</sequence>
<evidence type="ECO:0000250" key="1"/>
<evidence type="ECO:0000269" key="2">
    <source>
    </source>
</evidence>
<evidence type="ECO:0000305" key="3"/>
<comment type="catalytic activity">
    <reaction>
        <text>a primary alcohol + NAD(+) = an aldehyde + NADH + H(+)</text>
        <dbReference type="Rhea" id="RHEA:10736"/>
        <dbReference type="ChEBI" id="CHEBI:15378"/>
        <dbReference type="ChEBI" id="CHEBI:15734"/>
        <dbReference type="ChEBI" id="CHEBI:17478"/>
        <dbReference type="ChEBI" id="CHEBI:57540"/>
        <dbReference type="ChEBI" id="CHEBI:57945"/>
        <dbReference type="EC" id="1.1.1.1"/>
    </reaction>
</comment>
<comment type="catalytic activity">
    <reaction>
        <text>a secondary alcohol + NAD(+) = a ketone + NADH + H(+)</text>
        <dbReference type="Rhea" id="RHEA:10740"/>
        <dbReference type="ChEBI" id="CHEBI:15378"/>
        <dbReference type="ChEBI" id="CHEBI:17087"/>
        <dbReference type="ChEBI" id="CHEBI:35681"/>
        <dbReference type="ChEBI" id="CHEBI:57540"/>
        <dbReference type="ChEBI" id="CHEBI:57945"/>
        <dbReference type="EC" id="1.1.1.1"/>
    </reaction>
</comment>
<comment type="cofactor">
    <cofactor>
        <name>Zn(2+)</name>
        <dbReference type="ChEBI" id="CHEBI:29105"/>
    </cofactor>
    <text>Binds 2 Zn(2+) ions per subunit.</text>
</comment>
<comment type="subunit">
    <text>Homodimer.</text>
</comment>
<comment type="subcellular location">
    <subcellularLocation>
        <location>Cytoplasm</location>
    </subcellularLocation>
</comment>
<comment type="similarity">
    <text evidence="3">Belongs to the zinc-containing alcohol dehydrogenase family. Class-I subfamily.</text>
</comment>
<accession>P23991</accession>
<organism>
    <name type="scientific">Gallus gallus</name>
    <name type="common">Chicken</name>
    <dbReference type="NCBI Taxonomy" id="9031"/>
    <lineage>
        <taxon>Eukaryota</taxon>
        <taxon>Metazoa</taxon>
        <taxon>Chordata</taxon>
        <taxon>Craniata</taxon>
        <taxon>Vertebrata</taxon>
        <taxon>Euteleostomi</taxon>
        <taxon>Archelosauria</taxon>
        <taxon>Archosauria</taxon>
        <taxon>Dinosauria</taxon>
        <taxon>Saurischia</taxon>
        <taxon>Theropoda</taxon>
        <taxon>Coelurosauria</taxon>
        <taxon>Aves</taxon>
        <taxon>Neognathae</taxon>
        <taxon>Galloanserae</taxon>
        <taxon>Galliformes</taxon>
        <taxon>Phasianidae</taxon>
        <taxon>Phasianinae</taxon>
        <taxon>Gallus</taxon>
    </lineage>
</organism>
<gene>
    <name type="primary">ADH1</name>
</gene>
<protein>
    <recommendedName>
        <fullName>Alcohol dehydrogenase 1</fullName>
        <shortName>ADH-1</shortName>
        <ecNumber>1.1.1.1</ecNumber>
    </recommendedName>
    <alternativeName>
        <fullName>Alcohol dehydrogenase I</fullName>
    </alternativeName>
</protein>